<proteinExistence type="inferred from homology"/>
<name>GLNE_CAUVC</name>
<organism>
    <name type="scientific">Caulobacter vibrioides (strain ATCC 19089 / CIP 103742 / CB 15)</name>
    <name type="common">Caulobacter crescentus</name>
    <dbReference type="NCBI Taxonomy" id="190650"/>
    <lineage>
        <taxon>Bacteria</taxon>
        <taxon>Pseudomonadati</taxon>
        <taxon>Pseudomonadota</taxon>
        <taxon>Alphaproteobacteria</taxon>
        <taxon>Caulobacterales</taxon>
        <taxon>Caulobacteraceae</taxon>
        <taxon>Caulobacter</taxon>
    </lineage>
</organism>
<dbReference type="EC" id="2.7.7.89" evidence="1"/>
<dbReference type="EC" id="2.7.7.42" evidence="1"/>
<dbReference type="EMBL" id="AE005673">
    <property type="protein sequence ID" value="AAK24717.1"/>
    <property type="molecule type" value="Genomic_DNA"/>
</dbReference>
<dbReference type="PIR" id="A87590">
    <property type="entry name" value="A87590"/>
</dbReference>
<dbReference type="RefSeq" id="NP_421549.1">
    <property type="nucleotide sequence ID" value="NC_002696.2"/>
</dbReference>
<dbReference type="SMR" id="Q9A4S7"/>
<dbReference type="STRING" id="190650.CC_2753"/>
<dbReference type="EnsemblBacteria" id="AAK24717">
    <property type="protein sequence ID" value="AAK24717"/>
    <property type="gene ID" value="CC_2753"/>
</dbReference>
<dbReference type="KEGG" id="ccr:CC_2753"/>
<dbReference type="PATRIC" id="fig|190650.5.peg.2754"/>
<dbReference type="eggNOG" id="COG1391">
    <property type="taxonomic scope" value="Bacteria"/>
</dbReference>
<dbReference type="HOGENOM" id="CLU_006233_0_0_5"/>
<dbReference type="BioCyc" id="CAULO:CC2753-MONOMER"/>
<dbReference type="Proteomes" id="UP000001816">
    <property type="component" value="Chromosome"/>
</dbReference>
<dbReference type="GO" id="GO:0005829">
    <property type="term" value="C:cytosol"/>
    <property type="evidence" value="ECO:0007669"/>
    <property type="project" value="TreeGrafter"/>
</dbReference>
<dbReference type="GO" id="GO:0008882">
    <property type="term" value="F:[glutamate-ammonia-ligase] adenylyltransferase activity"/>
    <property type="evidence" value="ECO:0007669"/>
    <property type="project" value="UniProtKB-UniRule"/>
</dbReference>
<dbReference type="GO" id="GO:0047388">
    <property type="term" value="F:[glutamine synthetase]-adenylyl-L-tyrosine phosphorylase activity"/>
    <property type="evidence" value="ECO:0007669"/>
    <property type="project" value="UniProtKB-EC"/>
</dbReference>
<dbReference type="GO" id="GO:0005524">
    <property type="term" value="F:ATP binding"/>
    <property type="evidence" value="ECO:0007669"/>
    <property type="project" value="UniProtKB-UniRule"/>
</dbReference>
<dbReference type="GO" id="GO:0000287">
    <property type="term" value="F:magnesium ion binding"/>
    <property type="evidence" value="ECO:0007669"/>
    <property type="project" value="UniProtKB-UniRule"/>
</dbReference>
<dbReference type="GO" id="GO:0000820">
    <property type="term" value="P:regulation of glutamine family amino acid metabolic process"/>
    <property type="evidence" value="ECO:0007669"/>
    <property type="project" value="UniProtKB-UniRule"/>
</dbReference>
<dbReference type="CDD" id="cd05401">
    <property type="entry name" value="NT_GlnE_GlnD_like"/>
    <property type="match status" value="2"/>
</dbReference>
<dbReference type="Gene3D" id="1.20.120.1510">
    <property type="match status" value="1"/>
</dbReference>
<dbReference type="Gene3D" id="3.30.460.10">
    <property type="entry name" value="Beta Polymerase, domain 2"/>
    <property type="match status" value="2"/>
</dbReference>
<dbReference type="Gene3D" id="1.20.120.330">
    <property type="entry name" value="Nucleotidyltransferases domain 2"/>
    <property type="match status" value="2"/>
</dbReference>
<dbReference type="HAMAP" id="MF_00802">
    <property type="entry name" value="GlnE"/>
    <property type="match status" value="1"/>
</dbReference>
<dbReference type="InterPro" id="IPR023057">
    <property type="entry name" value="GlnE"/>
</dbReference>
<dbReference type="InterPro" id="IPR005190">
    <property type="entry name" value="GlnE_rpt_dom"/>
</dbReference>
<dbReference type="InterPro" id="IPR043519">
    <property type="entry name" value="NT_sf"/>
</dbReference>
<dbReference type="InterPro" id="IPR013546">
    <property type="entry name" value="PII_UdlTrfase/GS_AdlTrfase"/>
</dbReference>
<dbReference type="NCBIfam" id="NF008292">
    <property type="entry name" value="PRK11072.1"/>
    <property type="match status" value="1"/>
</dbReference>
<dbReference type="NCBIfam" id="NF010706">
    <property type="entry name" value="PRK14108.1"/>
    <property type="match status" value="1"/>
</dbReference>
<dbReference type="PANTHER" id="PTHR30621:SF0">
    <property type="entry name" value="BIFUNCTIONAL GLUTAMINE SYNTHETASE ADENYLYLTRANSFERASE_ADENYLYL-REMOVING ENZYME"/>
    <property type="match status" value="1"/>
</dbReference>
<dbReference type="PANTHER" id="PTHR30621">
    <property type="entry name" value="GLUTAMINE SYNTHETASE ADENYLYLTRANSFERASE"/>
    <property type="match status" value="1"/>
</dbReference>
<dbReference type="Pfam" id="PF08335">
    <property type="entry name" value="GlnD_UR_UTase"/>
    <property type="match status" value="2"/>
</dbReference>
<dbReference type="Pfam" id="PF03710">
    <property type="entry name" value="GlnE"/>
    <property type="match status" value="2"/>
</dbReference>
<dbReference type="SUPFAM" id="SSF81301">
    <property type="entry name" value="Nucleotidyltransferase"/>
    <property type="match status" value="2"/>
</dbReference>
<dbReference type="SUPFAM" id="SSF81593">
    <property type="entry name" value="Nucleotidyltransferase substrate binding subunit/domain"/>
    <property type="match status" value="2"/>
</dbReference>
<protein>
    <recommendedName>
        <fullName evidence="1">Bifunctional glutamine synthetase adenylyltransferase/adenylyl-removing enzyme</fullName>
    </recommendedName>
    <alternativeName>
        <fullName evidence="1">ATP:glutamine synthetase adenylyltransferase</fullName>
    </alternativeName>
    <alternativeName>
        <fullName evidence="1">ATase</fullName>
    </alternativeName>
    <domain>
        <recommendedName>
            <fullName evidence="1">Glutamine synthetase adenylyl-L-tyrosine phosphorylase</fullName>
            <ecNumber evidence="1">2.7.7.89</ecNumber>
        </recommendedName>
        <alternativeName>
            <fullName evidence="1">Adenylyl removase</fullName>
            <shortName evidence="1">AR</shortName>
            <shortName evidence="1">AT-N</shortName>
        </alternativeName>
    </domain>
    <domain>
        <recommendedName>
            <fullName evidence="1">Glutamine synthetase adenylyl transferase</fullName>
            <ecNumber evidence="1">2.7.7.42</ecNumber>
        </recommendedName>
        <alternativeName>
            <fullName evidence="1">Adenylyl transferase</fullName>
            <shortName evidence="1">AT</shortName>
            <shortName evidence="1">AT-C</shortName>
        </alternativeName>
    </domain>
</protein>
<accession>Q9A4S7</accession>
<feature type="chain" id="PRO_0000209239" description="Bifunctional glutamine synthetase adenylyltransferase/adenylyl-removing enzyme">
    <location>
        <begin position="1"/>
        <end position="986"/>
    </location>
</feature>
<feature type="region of interest" description="Adenylyl removase" evidence="1">
    <location>
        <begin position="1"/>
        <end position="482"/>
    </location>
</feature>
<feature type="region of interest" description="Adenylyl transferase" evidence="1">
    <location>
        <begin position="486"/>
        <end position="986"/>
    </location>
</feature>
<keyword id="KW-0067">ATP-binding</keyword>
<keyword id="KW-0460">Magnesium</keyword>
<keyword id="KW-0511">Multifunctional enzyme</keyword>
<keyword id="KW-0547">Nucleotide-binding</keyword>
<keyword id="KW-0548">Nucleotidyltransferase</keyword>
<keyword id="KW-1185">Reference proteome</keyword>
<keyword id="KW-0808">Transferase</keyword>
<gene>
    <name evidence="1" type="primary">glnE</name>
    <name type="ordered locus">CC_2753</name>
</gene>
<evidence type="ECO:0000255" key="1">
    <source>
        <dbReference type="HAMAP-Rule" id="MF_00802"/>
    </source>
</evidence>
<comment type="function">
    <text evidence="1">Involved in the regulation of glutamine synthetase GlnA, a key enzyme in the process to assimilate ammonia. When cellular nitrogen levels are high, the C-terminal adenylyl transferase (AT) inactivates GlnA by covalent transfer of an adenylyl group from ATP to specific tyrosine residue of GlnA, thus reducing its activity. Conversely, when nitrogen levels are low, the N-terminal adenylyl removase (AR) activates GlnA by removing the adenylyl group by phosphorolysis, increasing its activity. The regulatory region of GlnE binds the signal transduction protein PII (GlnB) which indicates the nitrogen status of the cell.</text>
</comment>
<comment type="catalytic activity">
    <reaction evidence="1">
        <text>[glutamine synthetase]-O(4)-(5'-adenylyl)-L-tyrosine + phosphate = [glutamine synthetase]-L-tyrosine + ADP</text>
        <dbReference type="Rhea" id="RHEA:43716"/>
        <dbReference type="Rhea" id="RHEA-COMP:10660"/>
        <dbReference type="Rhea" id="RHEA-COMP:10661"/>
        <dbReference type="ChEBI" id="CHEBI:43474"/>
        <dbReference type="ChEBI" id="CHEBI:46858"/>
        <dbReference type="ChEBI" id="CHEBI:83624"/>
        <dbReference type="ChEBI" id="CHEBI:456216"/>
        <dbReference type="EC" id="2.7.7.89"/>
    </reaction>
</comment>
<comment type="catalytic activity">
    <reaction evidence="1">
        <text>[glutamine synthetase]-L-tyrosine + ATP = [glutamine synthetase]-O(4)-(5'-adenylyl)-L-tyrosine + diphosphate</text>
        <dbReference type="Rhea" id="RHEA:18589"/>
        <dbReference type="Rhea" id="RHEA-COMP:10660"/>
        <dbReference type="Rhea" id="RHEA-COMP:10661"/>
        <dbReference type="ChEBI" id="CHEBI:30616"/>
        <dbReference type="ChEBI" id="CHEBI:33019"/>
        <dbReference type="ChEBI" id="CHEBI:46858"/>
        <dbReference type="ChEBI" id="CHEBI:83624"/>
        <dbReference type="EC" id="2.7.7.42"/>
    </reaction>
</comment>
<comment type="cofactor">
    <cofactor evidence="1">
        <name>Mg(2+)</name>
        <dbReference type="ChEBI" id="CHEBI:18420"/>
    </cofactor>
</comment>
<comment type="similarity">
    <text evidence="1">Belongs to the GlnE family.</text>
</comment>
<reference key="1">
    <citation type="journal article" date="2001" name="Proc. Natl. Acad. Sci. U.S.A.">
        <title>Complete genome sequence of Caulobacter crescentus.</title>
        <authorList>
            <person name="Nierman W.C."/>
            <person name="Feldblyum T.V."/>
            <person name="Laub M.T."/>
            <person name="Paulsen I.T."/>
            <person name="Nelson K.E."/>
            <person name="Eisen J.A."/>
            <person name="Heidelberg J.F."/>
            <person name="Alley M.R.K."/>
            <person name="Ohta N."/>
            <person name="Maddock J.R."/>
            <person name="Potocka I."/>
            <person name="Nelson W.C."/>
            <person name="Newton A."/>
            <person name="Stephens C."/>
            <person name="Phadke N.D."/>
            <person name="Ely B."/>
            <person name="DeBoy R.T."/>
            <person name="Dodson R.J."/>
            <person name="Durkin A.S."/>
            <person name="Gwinn M.L."/>
            <person name="Haft D.H."/>
            <person name="Kolonay J.F."/>
            <person name="Smit J."/>
            <person name="Craven M.B."/>
            <person name="Khouri H.M."/>
            <person name="Shetty J."/>
            <person name="Berry K.J."/>
            <person name="Utterback T.R."/>
            <person name="Tran K."/>
            <person name="Wolf A.M."/>
            <person name="Vamathevan J.J."/>
            <person name="Ermolaeva M.D."/>
            <person name="White O."/>
            <person name="Salzberg S.L."/>
            <person name="Venter J.C."/>
            <person name="Shapiro L."/>
            <person name="Fraser C.M."/>
        </authorList>
    </citation>
    <scope>NUCLEOTIDE SEQUENCE [LARGE SCALE GENOMIC DNA]</scope>
    <source>
        <strain>ATCC 19089 / CIP 103742 / CB 15</strain>
    </source>
</reference>
<sequence length="986" mass="106531">MVTTVISNVKRQSRASLVGKRNAGHRSAMSKLADRLAPCGPVLDPKAAERAYEAIAKRAGEAMGQVDAAWGSLAPVFAASPYLAGLARRDGKRLPRILGGDPGETLAAILAAAEAVAAEPDFETARRVLRELKADLHLLTAISDLGGVWDLDQVTGALTRFADAVLHAALAQAVRQEVSRGALTHVGDGSAGPAPGLFCVAMGKHGAFELNYSSDIDFSIFYAPEKLPVAEGHEPQAVAVRIANHLGRILQERTGDGYVFRIDLRLRPDPSSTPPAMPVDAAMDYYESVGQNWERAAHIKARIAAGDAAEGAAFLEGLQPFIWRRNLDFAAIADIHSIKRQIHTYKVDDRLTAKGADLKLGRGGIREIEFFVQTQQLILGGRQPDLRSPRTLDALQALAAAGHVTPEDAAWLTQAYKDLRALEHRAQMIADDQTHKLPESDVERKKVAALWGEGNLRVFDAAVGKMLKGVNLRYGRLFAGEEALSSRFGSLVFTGVEDDPETLATLKRMGFSSPERVAATIRGWHHGHIAATRTERGRELFTRLAPRLLDAANATGAPDQAFNRFSDFFSRLSSGVQIQSLFLAQPRLFELIVEVMAFAPRLAATMAKRPTALDALLDPTFFGPIETPAIAPWDPEDFEGAMDAARRLFRDQSFRIGVRVMSGTADARDIGRAFAELADLIIGGLAPAALAEVERIGGAFPGQVAVVALGKAGSREMTAKSDLDLMTLYVADDPRSMSALKDWSAEVFYARLTQRLTSALSAPTGEGTLYEVDLKLRPSGTKGPVAVSFAAFEHYYEREAETWELLALTRARVVWASSPDFKARAEGAIAAALRRPRAWKKTAADVIEMRQLMERERPGKGDWDLKLDPGGLVDIEFAAQFLQLAHAAADGPLRQNTGEALAALREAGLADAGALSRLEAAWRLEQDLSQLIKVALEDGADVEVEPKAFKALLAKAGGVTQFKSLKPKLAKAKAEARAAYEAVVKG</sequence>